<comment type="function">
    <text evidence="1">Inhibits all the catalytic activities of DNA gyrase by preventing its interaction with DNA. Acts by binding directly to the C-terminal domain of GyrB, which probably disrupts DNA binding by the gyrase.</text>
</comment>
<comment type="cofactor">
    <cofactor evidence="1">
        <name>Zn(2+)</name>
        <dbReference type="ChEBI" id="CHEBI:29105"/>
    </cofactor>
    <text evidence="1">Binds 1 zinc ion.</text>
</comment>
<comment type="subunit">
    <text evidence="1">Interacts with GyrB.</text>
</comment>
<comment type="similarity">
    <text evidence="1">Belongs to the DNA gyrase inhibitor YacG family.</text>
</comment>
<keyword id="KW-0479">Metal-binding</keyword>
<keyword id="KW-1185">Reference proteome</keyword>
<keyword id="KW-0862">Zinc</keyword>
<dbReference type="EMBL" id="AE004091">
    <property type="protein sequence ID" value="AAG07918.1"/>
    <property type="molecule type" value="Genomic_DNA"/>
</dbReference>
<dbReference type="PIR" id="F83078">
    <property type="entry name" value="F83078"/>
</dbReference>
<dbReference type="RefSeq" id="NP_253220.1">
    <property type="nucleotide sequence ID" value="NC_002516.2"/>
</dbReference>
<dbReference type="RefSeq" id="WP_003094656.1">
    <property type="nucleotide sequence ID" value="NZ_QZGE01000004.1"/>
</dbReference>
<dbReference type="SMR" id="Q9HVP7"/>
<dbReference type="FunCoup" id="Q9HVP7">
    <property type="interactions" value="76"/>
</dbReference>
<dbReference type="STRING" id="208964.PA4530"/>
<dbReference type="PaxDb" id="208964-PA4530"/>
<dbReference type="DNASU" id="878573"/>
<dbReference type="GeneID" id="77223033"/>
<dbReference type="GeneID" id="878573"/>
<dbReference type="KEGG" id="pae:PA4530"/>
<dbReference type="PATRIC" id="fig|208964.12.peg.4741"/>
<dbReference type="PseudoCAP" id="PA4530"/>
<dbReference type="HOGENOM" id="CLU_178280_3_2_6"/>
<dbReference type="InParanoid" id="Q9HVP7"/>
<dbReference type="OrthoDB" id="9809663at2"/>
<dbReference type="PhylomeDB" id="Q9HVP7"/>
<dbReference type="BioCyc" id="PAER208964:G1FZ6-4620-MONOMER"/>
<dbReference type="Proteomes" id="UP000002438">
    <property type="component" value="Chromosome"/>
</dbReference>
<dbReference type="GO" id="GO:0008657">
    <property type="term" value="F:DNA topoisomerase type II (double strand cut, ATP-hydrolyzing) inhibitor activity"/>
    <property type="evidence" value="ECO:0000318"/>
    <property type="project" value="GO_Central"/>
</dbReference>
<dbReference type="GO" id="GO:0008270">
    <property type="term" value="F:zinc ion binding"/>
    <property type="evidence" value="ECO:0007669"/>
    <property type="project" value="UniProtKB-UniRule"/>
</dbReference>
<dbReference type="GO" id="GO:0006355">
    <property type="term" value="P:regulation of DNA-templated transcription"/>
    <property type="evidence" value="ECO:0007669"/>
    <property type="project" value="InterPro"/>
</dbReference>
<dbReference type="Gene3D" id="3.30.50.10">
    <property type="entry name" value="Erythroid Transcription Factor GATA-1, subunit A"/>
    <property type="match status" value="1"/>
</dbReference>
<dbReference type="HAMAP" id="MF_00649">
    <property type="entry name" value="DNA_gyrase_inhibitor_YacG"/>
    <property type="match status" value="1"/>
</dbReference>
<dbReference type="InterPro" id="IPR005584">
    <property type="entry name" value="DNA_gyrase_inhibitor_YacG"/>
</dbReference>
<dbReference type="InterPro" id="IPR013088">
    <property type="entry name" value="Znf_NHR/GATA"/>
</dbReference>
<dbReference type="NCBIfam" id="NF001638">
    <property type="entry name" value="PRK00418.1"/>
    <property type="match status" value="1"/>
</dbReference>
<dbReference type="PANTHER" id="PTHR36150">
    <property type="entry name" value="DNA GYRASE INHIBITOR YACG"/>
    <property type="match status" value="1"/>
</dbReference>
<dbReference type="PANTHER" id="PTHR36150:SF1">
    <property type="entry name" value="DNA GYRASE INHIBITOR YACG"/>
    <property type="match status" value="1"/>
</dbReference>
<dbReference type="Pfam" id="PF03884">
    <property type="entry name" value="YacG"/>
    <property type="match status" value="1"/>
</dbReference>
<dbReference type="SUPFAM" id="SSF57716">
    <property type="entry name" value="Glucocorticoid receptor-like (DNA-binding domain)"/>
    <property type="match status" value="1"/>
</dbReference>
<proteinExistence type="inferred from homology"/>
<feature type="chain" id="PRO_0000211715" description="DNA gyrase inhibitor YacG">
    <location>
        <begin position="1"/>
        <end position="66"/>
    </location>
</feature>
<feature type="binding site" evidence="1">
    <location>
        <position position="9"/>
    </location>
    <ligand>
        <name>Zn(2+)</name>
        <dbReference type="ChEBI" id="CHEBI:29105"/>
    </ligand>
</feature>
<feature type="binding site" evidence="1">
    <location>
        <position position="12"/>
    </location>
    <ligand>
        <name>Zn(2+)</name>
        <dbReference type="ChEBI" id="CHEBI:29105"/>
    </ligand>
</feature>
<feature type="binding site" evidence="1">
    <location>
        <position position="28"/>
    </location>
    <ligand>
        <name>Zn(2+)</name>
        <dbReference type="ChEBI" id="CHEBI:29105"/>
    </ligand>
</feature>
<feature type="binding site" evidence="1">
    <location>
        <position position="32"/>
    </location>
    <ligand>
        <name>Zn(2+)</name>
        <dbReference type="ChEBI" id="CHEBI:29105"/>
    </ligand>
</feature>
<sequence length="66" mass="7374">MSQPLTVECPTCGAPVEWKSDNKYRPFCSDRCKLIDLGAWAAEEHAIPGDTLEDDIFSADLPPREH</sequence>
<protein>
    <recommendedName>
        <fullName evidence="1">DNA gyrase inhibitor YacG</fullName>
    </recommendedName>
</protein>
<evidence type="ECO:0000255" key="1">
    <source>
        <dbReference type="HAMAP-Rule" id="MF_00649"/>
    </source>
</evidence>
<accession>Q9HVP7</accession>
<gene>
    <name evidence="1" type="primary">yacG</name>
    <name type="ordered locus">PA4530</name>
</gene>
<organism>
    <name type="scientific">Pseudomonas aeruginosa (strain ATCC 15692 / DSM 22644 / CIP 104116 / JCM 14847 / LMG 12228 / 1C / PRS 101 / PAO1)</name>
    <dbReference type="NCBI Taxonomy" id="208964"/>
    <lineage>
        <taxon>Bacteria</taxon>
        <taxon>Pseudomonadati</taxon>
        <taxon>Pseudomonadota</taxon>
        <taxon>Gammaproteobacteria</taxon>
        <taxon>Pseudomonadales</taxon>
        <taxon>Pseudomonadaceae</taxon>
        <taxon>Pseudomonas</taxon>
    </lineage>
</organism>
<name>YACG_PSEAE</name>
<reference key="1">
    <citation type="journal article" date="2000" name="Nature">
        <title>Complete genome sequence of Pseudomonas aeruginosa PAO1, an opportunistic pathogen.</title>
        <authorList>
            <person name="Stover C.K."/>
            <person name="Pham X.-Q.T."/>
            <person name="Erwin A.L."/>
            <person name="Mizoguchi S.D."/>
            <person name="Warrener P."/>
            <person name="Hickey M.J."/>
            <person name="Brinkman F.S.L."/>
            <person name="Hufnagle W.O."/>
            <person name="Kowalik D.J."/>
            <person name="Lagrou M."/>
            <person name="Garber R.L."/>
            <person name="Goltry L."/>
            <person name="Tolentino E."/>
            <person name="Westbrock-Wadman S."/>
            <person name="Yuan Y."/>
            <person name="Brody L.L."/>
            <person name="Coulter S.N."/>
            <person name="Folger K.R."/>
            <person name="Kas A."/>
            <person name="Larbig K."/>
            <person name="Lim R.M."/>
            <person name="Smith K.A."/>
            <person name="Spencer D.H."/>
            <person name="Wong G.K.-S."/>
            <person name="Wu Z."/>
            <person name="Paulsen I.T."/>
            <person name="Reizer J."/>
            <person name="Saier M.H. Jr."/>
            <person name="Hancock R.E.W."/>
            <person name="Lory S."/>
            <person name="Olson M.V."/>
        </authorList>
    </citation>
    <scope>NUCLEOTIDE SEQUENCE [LARGE SCALE GENOMIC DNA]</scope>
    <source>
        <strain>ATCC 15692 / DSM 22644 / CIP 104116 / JCM 14847 / LMG 12228 / 1C / PRS 101 / PAO1</strain>
    </source>
</reference>